<accession>O67637</accession>
<sequence>MMEEIKELIDYGIMGTLLFMSFVALAVGIERYLSIRSTKVENFKSKAQLEKELTKRLYIIATVASNAPYVGLLGTVLGILLTFYIIGEKGIVNTKEIMVGLALALKATALGLIVAIPSTILYNFLVRKVREKLLDWEAIHGECSSSHE</sequence>
<organism>
    <name type="scientific">Aquifex aeolicus (strain VF5)</name>
    <dbReference type="NCBI Taxonomy" id="224324"/>
    <lineage>
        <taxon>Bacteria</taxon>
        <taxon>Pseudomonadati</taxon>
        <taxon>Aquificota</taxon>
        <taxon>Aquificia</taxon>
        <taxon>Aquificales</taxon>
        <taxon>Aquificaceae</taxon>
        <taxon>Aquifex</taxon>
    </lineage>
</organism>
<keyword id="KW-1003">Cell membrane</keyword>
<keyword id="KW-0472">Membrane</keyword>
<keyword id="KW-0653">Protein transport</keyword>
<keyword id="KW-1185">Reference proteome</keyword>
<keyword id="KW-0812">Transmembrane</keyword>
<keyword id="KW-1133">Transmembrane helix</keyword>
<keyword id="KW-0813">Transport</keyword>
<feature type="chain" id="PRO_0000145798" description="Biopolymer transport protein ExbB">
    <location>
        <begin position="1"/>
        <end position="148"/>
    </location>
</feature>
<feature type="transmembrane region" description="Helical" evidence="2">
    <location>
        <begin position="9"/>
        <end position="29"/>
    </location>
</feature>
<feature type="transmembrane region" description="Helical" evidence="2">
    <location>
        <begin position="67"/>
        <end position="87"/>
    </location>
</feature>
<feature type="transmembrane region" description="Helical" evidence="2">
    <location>
        <begin position="97"/>
        <end position="117"/>
    </location>
</feature>
<gene>
    <name type="primary">exbB</name>
    <name type="ordered locus">aq_1757</name>
</gene>
<protein>
    <recommendedName>
        <fullName>Biopolymer transport protein ExbB</fullName>
    </recommendedName>
</protein>
<name>EXBB_AQUAE</name>
<evidence type="ECO:0000250" key="1"/>
<evidence type="ECO:0000255" key="2"/>
<evidence type="ECO:0000305" key="3"/>
<comment type="function">
    <text evidence="1">Involved in the TonB-dependent energy-dependent transport of various receptor-bound substrates. Protects ExbD from proteolytic degradation and functionally stabilizes TonB (By similarity).</text>
</comment>
<comment type="subunit">
    <text evidence="1">The accessory proteins ExbB and ExbD seem to form a complex with TonB.</text>
</comment>
<comment type="subcellular location">
    <subcellularLocation>
        <location evidence="3">Cell membrane</location>
        <topology evidence="3">Multi-pass membrane protein</topology>
    </subcellularLocation>
</comment>
<comment type="similarity">
    <text evidence="3">Belongs to the ExbB/TolQ family.</text>
</comment>
<reference key="1">
    <citation type="journal article" date="1998" name="Nature">
        <title>The complete genome of the hyperthermophilic bacterium Aquifex aeolicus.</title>
        <authorList>
            <person name="Deckert G."/>
            <person name="Warren P.V."/>
            <person name="Gaasterland T."/>
            <person name="Young W.G."/>
            <person name="Lenox A.L."/>
            <person name="Graham D.E."/>
            <person name="Overbeek R."/>
            <person name="Snead M.A."/>
            <person name="Keller M."/>
            <person name="Aujay M."/>
            <person name="Huber R."/>
            <person name="Feldman R.A."/>
            <person name="Short J.M."/>
            <person name="Olsen G.J."/>
            <person name="Swanson R.V."/>
        </authorList>
    </citation>
    <scope>NUCLEOTIDE SEQUENCE [LARGE SCALE GENOMIC DNA]</scope>
    <source>
        <strain>VF5</strain>
    </source>
</reference>
<proteinExistence type="inferred from homology"/>
<dbReference type="EMBL" id="AE000657">
    <property type="protein sequence ID" value="AAC07592.1"/>
    <property type="molecule type" value="Genomic_DNA"/>
</dbReference>
<dbReference type="PIR" id="C70451">
    <property type="entry name" value="C70451"/>
</dbReference>
<dbReference type="RefSeq" id="NP_214203.1">
    <property type="nucleotide sequence ID" value="NC_000918.1"/>
</dbReference>
<dbReference type="SMR" id="O67637"/>
<dbReference type="STRING" id="224324.aq_1757"/>
<dbReference type="EnsemblBacteria" id="AAC07592">
    <property type="protein sequence ID" value="AAC07592"/>
    <property type="gene ID" value="aq_1757"/>
</dbReference>
<dbReference type="KEGG" id="aae:aq_1757"/>
<dbReference type="PATRIC" id="fig|224324.8.peg.1355"/>
<dbReference type="eggNOG" id="COG0811">
    <property type="taxonomic scope" value="Bacteria"/>
</dbReference>
<dbReference type="HOGENOM" id="CLU_133317_0_0_0"/>
<dbReference type="InParanoid" id="O67637"/>
<dbReference type="OrthoDB" id="9805133at2"/>
<dbReference type="Proteomes" id="UP000000798">
    <property type="component" value="Chromosome"/>
</dbReference>
<dbReference type="GO" id="GO:0005886">
    <property type="term" value="C:plasma membrane"/>
    <property type="evidence" value="ECO:0000318"/>
    <property type="project" value="GO_Central"/>
</dbReference>
<dbReference type="GO" id="GO:0017038">
    <property type="term" value="P:protein import"/>
    <property type="evidence" value="ECO:0000318"/>
    <property type="project" value="GO_Central"/>
</dbReference>
<dbReference type="GO" id="GO:0055085">
    <property type="term" value="P:transmembrane transport"/>
    <property type="evidence" value="ECO:0007669"/>
    <property type="project" value="InterPro"/>
</dbReference>
<dbReference type="InterPro" id="IPR050790">
    <property type="entry name" value="ExbB/TolQ_transport"/>
</dbReference>
<dbReference type="InterPro" id="IPR002898">
    <property type="entry name" value="MotA_ExbB_proton_chnl"/>
</dbReference>
<dbReference type="InterPro" id="IPR014172">
    <property type="entry name" value="TonB_ExbB_2"/>
</dbReference>
<dbReference type="NCBIfam" id="TIGR02805">
    <property type="entry name" value="exbB2"/>
    <property type="match status" value="1"/>
</dbReference>
<dbReference type="PANTHER" id="PTHR30625:SF15">
    <property type="entry name" value="BIOPOLYMER TRANSPORT PROTEIN EXBB"/>
    <property type="match status" value="1"/>
</dbReference>
<dbReference type="PANTHER" id="PTHR30625">
    <property type="entry name" value="PROTEIN TOLQ"/>
    <property type="match status" value="1"/>
</dbReference>
<dbReference type="Pfam" id="PF01618">
    <property type="entry name" value="MotA_ExbB"/>
    <property type="match status" value="1"/>
</dbReference>